<reference key="1">
    <citation type="submission" date="2004-01" db="EMBL/GenBank/DDBJ databases">
        <title>Isolation and sequencing of nonspecific nucleoside hydrolase (nsnh) from Leishmania.</title>
        <authorList>
            <person name="Banuls A.L."/>
            <person name="Hide M."/>
        </authorList>
    </citation>
    <scope>NUCLEOTIDE SEQUENCE [GENOMIC DNA]</scope>
    <source>
        <strain evidence="7">MHOM/SU/73/5ASKH</strain>
    </source>
</reference>
<reference evidence="8" key="2">
    <citation type="journal article" date="1999" name="J. Biol. Chem.">
        <title>Nucleoside hydrolase from Leishmania major. Cloning, expression, catalytic properties, transition state inhibitors, and the 2.5-A crystal structure.</title>
        <authorList>
            <person name="Shi W."/>
            <person name="Schramm V.L."/>
            <person name="Almo S.C."/>
        </authorList>
    </citation>
    <scope>X-RAY CRYSTALLOGRAPHY (2.5 ANGSTROMS)</scope>
    <scope>FUNCTION</scope>
    <scope>CATALYTIC ACTIVITY</scope>
    <scope>SUBSTRATE SPECIFICITY</scope>
    <scope>BIOPHYSICOCHEMICAL PROPERTIES</scope>
    <scope>COFACTOR</scope>
    <scope>ACTIVITY REGULATION</scope>
    <scope>SUBUNIT</scope>
    <scope>PATHWAY</scope>
</reference>
<keyword id="KW-0002">3D-structure</keyword>
<keyword id="KW-0106">Calcium</keyword>
<keyword id="KW-0326">Glycosidase</keyword>
<keyword id="KW-0378">Hydrolase</keyword>
<keyword id="KW-0479">Metal-binding</keyword>
<keyword id="KW-0546">Nucleotide metabolism</keyword>
<protein>
    <recommendedName>
        <fullName evidence="4">Inosine-uridine preferring nucleoside hydrolase</fullName>
        <shortName evidence="4">IU-NH</shortName>
        <shortName evidence="4">IU-nucleoside hydrolase</shortName>
        <ecNumber evidence="3">3.2.2.2</ecNumber>
        <ecNumber evidence="3">3.2.2.3</ecNumber>
    </recommendedName>
    <alternativeName>
        <fullName evidence="4">Non-specific nucleoside hydrolase</fullName>
    </alternativeName>
</protein>
<proteinExistence type="evidence at protein level"/>
<comment type="function">
    <text evidence="3">Catalyzes the hydrolysis of the N-glycosidic bond of all of the commonly occurring purine and pyrimidine nucleosides into ribose and the associated base, but has a preference for inosine and uridine as substrates. Likely functions in purine salvage from the host, a fundamental pathway since protozoan parasites such as L.major are incapable of de novo purine biosynthesis.</text>
</comment>
<comment type="catalytic activity">
    <reaction evidence="3">
        <text>inosine + H2O = hypoxanthine + D-ribose</text>
        <dbReference type="Rhea" id="RHEA:16657"/>
        <dbReference type="ChEBI" id="CHEBI:15377"/>
        <dbReference type="ChEBI" id="CHEBI:17368"/>
        <dbReference type="ChEBI" id="CHEBI:17596"/>
        <dbReference type="ChEBI" id="CHEBI:47013"/>
        <dbReference type="EC" id="3.2.2.2"/>
    </reaction>
</comment>
<comment type="catalytic activity">
    <reaction evidence="3">
        <text>uridine + H2O = D-ribose + uracil</text>
        <dbReference type="Rhea" id="RHEA:15577"/>
        <dbReference type="ChEBI" id="CHEBI:15377"/>
        <dbReference type="ChEBI" id="CHEBI:16704"/>
        <dbReference type="ChEBI" id="CHEBI:17568"/>
        <dbReference type="ChEBI" id="CHEBI:47013"/>
        <dbReference type="EC" id="3.2.2.3"/>
    </reaction>
</comment>
<comment type="cofactor">
    <cofactor evidence="6">
        <name>Ca(2+)</name>
        <dbReference type="ChEBI" id="CHEBI:29108"/>
    </cofactor>
</comment>
<comment type="activity regulation">
    <text evidence="3">Is potently inhibited by immucillin A and immucillin ACAP, which are transition state inhibitors.</text>
</comment>
<comment type="biophysicochemical properties">
    <kinetics>
        <KM evidence="3">445 uM for inosine</KM>
        <KM evidence="3">234 uM for uridine</KM>
        <KM evidence="3">140 uM for guanosine</KM>
        <KM evidence="3">185 uM for adenosine</KM>
        <KM evidence="3">422 uM for cytidine</KM>
        <text evidence="3">kcat is 119 sec(-1) with inosine as substrate. kcat is 32 sec(-1) with uridine as substrate. kcat is 0.6 sec(-1) with guanosine as substrate. kcat is 0.6 sec(-1) with adenosine as substrate. kcat is 0.4 sec(-1) with cytidine as substrate.</text>
    </kinetics>
</comment>
<comment type="pathway">
    <text evidence="6">Purine metabolism; purine nucleoside salvage.</text>
</comment>
<comment type="subunit">
    <text evidence="3">Homotetramer.</text>
</comment>
<comment type="similarity">
    <text evidence="5">Belongs to the IUNH family.</text>
</comment>
<accession>P83851</accession>
<accession>Q6QMH8</accession>
<feature type="initiator methionine" description="Removed" evidence="1">
    <location>
        <position position="1"/>
    </location>
</feature>
<feature type="chain" id="PRO_0000206811" description="Inosine-uridine preferring nucleoside hydrolase">
    <location>
        <begin position="2"/>
        <end position="314"/>
    </location>
</feature>
<feature type="active site" description="Proton donor" evidence="2">
    <location>
        <position position="240"/>
    </location>
</feature>
<feature type="binding site">
    <location>
        <position position="10"/>
    </location>
    <ligand>
        <name>Ca(2+)</name>
        <dbReference type="ChEBI" id="CHEBI:29108"/>
    </ligand>
</feature>
<feature type="binding site" evidence="1">
    <location>
        <position position="14"/>
    </location>
    <ligand>
        <name>substrate</name>
    </ligand>
</feature>
<feature type="binding site">
    <location>
        <position position="15"/>
    </location>
    <ligand>
        <name>Ca(2+)</name>
        <dbReference type="ChEBI" id="CHEBI:29108"/>
    </ligand>
</feature>
<feature type="binding site">
    <location>
        <position position="126"/>
    </location>
    <ligand>
        <name>Ca(2+)</name>
        <dbReference type="ChEBI" id="CHEBI:29108"/>
    </ligand>
</feature>
<feature type="binding site" evidence="1">
    <location>
        <position position="160"/>
    </location>
    <ligand>
        <name>substrate</name>
    </ligand>
</feature>
<feature type="binding site" evidence="1">
    <location>
        <position position="166"/>
    </location>
    <ligand>
        <name>substrate</name>
    </ligand>
</feature>
<feature type="binding site" evidence="1">
    <location>
        <position position="168"/>
    </location>
    <ligand>
        <name>substrate</name>
    </ligand>
</feature>
<feature type="binding site">
    <location>
        <position position="241"/>
    </location>
    <ligand>
        <name>Ca(2+)</name>
        <dbReference type="ChEBI" id="CHEBI:29108"/>
    </ligand>
</feature>
<feature type="sequence conflict" description="In Ref. 2." evidence="5" ref="2">
    <original>Q</original>
    <variation>L</variation>
    <location>
        <position position="196"/>
    </location>
</feature>
<feature type="sequence conflict" description="In Ref. 2." evidence="5" ref="2">
    <original>V</original>
    <variation>A</variation>
    <location>
        <position position="276"/>
    </location>
</feature>
<feature type="strand" evidence="9">
    <location>
        <begin position="3"/>
        <end position="9"/>
    </location>
</feature>
<feature type="helix" evidence="9">
    <location>
        <begin position="13"/>
        <end position="24"/>
    </location>
</feature>
<feature type="strand" evidence="9">
    <location>
        <begin position="28"/>
        <end position="35"/>
    </location>
</feature>
<feature type="helix" evidence="9">
    <location>
        <begin position="42"/>
        <end position="55"/>
    </location>
</feature>
<feature type="strand" evidence="9">
    <location>
        <begin position="63"/>
        <end position="65"/>
    </location>
</feature>
<feature type="strand" evidence="9">
    <location>
        <begin position="71"/>
        <end position="73"/>
    </location>
</feature>
<feature type="strand" evidence="9">
    <location>
        <begin position="85"/>
        <end position="87"/>
    </location>
</feature>
<feature type="helix" evidence="9">
    <location>
        <begin position="105"/>
        <end position="115"/>
    </location>
</feature>
<feature type="strand" evidence="9">
    <location>
        <begin position="121"/>
        <end position="125"/>
    </location>
</feature>
<feature type="helix" evidence="9">
    <location>
        <begin position="130"/>
        <end position="138"/>
    </location>
</feature>
<feature type="helix" evidence="9">
    <location>
        <begin position="142"/>
        <end position="145"/>
    </location>
</feature>
<feature type="strand" evidence="9">
    <location>
        <begin position="148"/>
        <end position="152"/>
    </location>
</feature>
<feature type="strand" evidence="9">
    <location>
        <begin position="160"/>
        <end position="164"/>
    </location>
</feature>
<feature type="helix" evidence="9">
    <location>
        <begin position="167"/>
        <end position="170"/>
    </location>
</feature>
<feature type="helix" evidence="9">
    <location>
        <begin position="173"/>
        <end position="180"/>
    </location>
</feature>
<feature type="strand" evidence="9">
    <location>
        <begin position="182"/>
        <end position="184"/>
    </location>
</feature>
<feature type="strand" evidence="9">
    <location>
        <begin position="186"/>
        <end position="189"/>
    </location>
</feature>
<feature type="helix" evidence="9">
    <location>
        <begin position="191"/>
        <end position="194"/>
    </location>
</feature>
<feature type="helix" evidence="9">
    <location>
        <begin position="201"/>
        <end position="210"/>
    </location>
</feature>
<feature type="helix" evidence="9">
    <location>
        <begin position="213"/>
        <end position="228"/>
    </location>
</feature>
<feature type="helix" evidence="9">
    <location>
        <begin position="230"/>
        <end position="232"/>
    </location>
</feature>
<feature type="strand" evidence="9">
    <location>
        <begin position="233"/>
        <end position="235"/>
    </location>
</feature>
<feature type="helix" evidence="9">
    <location>
        <begin position="242"/>
        <end position="249"/>
    </location>
</feature>
<feature type="helix" evidence="9">
    <location>
        <begin position="251"/>
        <end position="253"/>
    </location>
</feature>
<feature type="strand" evidence="9">
    <location>
        <begin position="254"/>
        <end position="257"/>
    </location>
</feature>
<feature type="strand" evidence="9">
    <location>
        <begin position="261"/>
        <end position="263"/>
    </location>
</feature>
<feature type="turn" evidence="9">
    <location>
        <begin position="268"/>
        <end position="272"/>
    </location>
</feature>
<feature type="strand" evidence="9">
    <location>
        <begin position="274"/>
        <end position="276"/>
    </location>
</feature>
<feature type="strand" evidence="9">
    <location>
        <begin position="287"/>
        <end position="294"/>
    </location>
</feature>
<feature type="helix" evidence="9">
    <location>
        <begin position="296"/>
        <end position="310"/>
    </location>
</feature>
<sequence>MPRKIILDCDPGIDDAVAIFLAHGNPEIELLAITTVVGNQSLEKVTQNARLVADVAGIVGVPVAAGCTKPLVRGVRNASHIHGETGMGNVSYPPEFKTKLDGRHAVQLIIDLIMSHEPKTITLVPTGGLTNIAMAVRLEPRIVDRVKEVVLMGGGYHTGNASPVAEFNVFIDPEAAHIVFNESWNVTMVGLDLTHQALATPAVQKRVREVGTKPAAFMLQILDFYTKVYEKEHDTYGKVHDPCAVAYVIDPTVMTTERVPVDIELNGALTTGMTVVDFRYPRPKNCRTQVAVKLDFDKFWCLVIDALERIGDPQ</sequence>
<evidence type="ECO:0000250" key="1"/>
<evidence type="ECO:0000250" key="2">
    <source>
        <dbReference type="UniProtKB" id="Q27546"/>
    </source>
</evidence>
<evidence type="ECO:0000269" key="3">
    <source>
    </source>
</evidence>
<evidence type="ECO:0000303" key="4">
    <source>
    </source>
</evidence>
<evidence type="ECO:0000305" key="5"/>
<evidence type="ECO:0000305" key="6">
    <source>
    </source>
</evidence>
<evidence type="ECO:0000312" key="7">
    <source>
        <dbReference type="EMBL" id="AAS48367.1"/>
    </source>
</evidence>
<evidence type="ECO:0000312" key="8">
    <source>
        <dbReference type="PDB" id="1EZR"/>
    </source>
</evidence>
<evidence type="ECO:0007829" key="9">
    <source>
        <dbReference type="PDB" id="1EZR"/>
    </source>
</evidence>
<gene>
    <name type="primary">NSNH</name>
</gene>
<organism>
    <name type="scientific">Leishmania major</name>
    <dbReference type="NCBI Taxonomy" id="5664"/>
    <lineage>
        <taxon>Eukaryota</taxon>
        <taxon>Discoba</taxon>
        <taxon>Euglenozoa</taxon>
        <taxon>Kinetoplastea</taxon>
        <taxon>Metakinetoplastina</taxon>
        <taxon>Trypanosomatida</taxon>
        <taxon>Trypanosomatidae</taxon>
        <taxon>Leishmaniinae</taxon>
        <taxon>Leishmania</taxon>
    </lineage>
</organism>
<name>IUNH_LEIMA</name>
<dbReference type="EC" id="3.2.2.2" evidence="3"/>
<dbReference type="EC" id="3.2.2.3" evidence="3"/>
<dbReference type="EMBL" id="AY533501">
    <property type="protein sequence ID" value="AAS48367.1"/>
    <property type="molecule type" value="Genomic_DNA"/>
</dbReference>
<dbReference type="PDB" id="1EZR">
    <property type="method" value="X-ray"/>
    <property type="resolution" value="2.50 A"/>
    <property type="chains" value="A/B/C/D=1-314"/>
</dbReference>
<dbReference type="PDBsum" id="1EZR"/>
<dbReference type="SMR" id="P83851"/>
<dbReference type="VEuPathDB" id="TriTrypDB:LmjF.18.1580"/>
<dbReference type="VEuPathDB" id="TriTrypDB:LMJFC_180024600"/>
<dbReference type="VEuPathDB" id="TriTrypDB:LMJLV39_180021500"/>
<dbReference type="VEuPathDB" id="TriTrypDB:LMJSD75_180021700"/>
<dbReference type="eggNOG" id="KOG2938">
    <property type="taxonomic scope" value="Eukaryota"/>
</dbReference>
<dbReference type="UniPathway" id="UPA00606"/>
<dbReference type="EvolutionaryTrace" id="P83851"/>
<dbReference type="GO" id="GO:0005509">
    <property type="term" value="F:calcium ion binding"/>
    <property type="evidence" value="ECO:0000314"/>
    <property type="project" value="UniProtKB"/>
</dbReference>
<dbReference type="GO" id="GO:0047724">
    <property type="term" value="F:inosine nucleosidase activity"/>
    <property type="evidence" value="ECO:0000314"/>
    <property type="project" value="UniProtKB"/>
</dbReference>
<dbReference type="GO" id="GO:0008477">
    <property type="term" value="F:purine nucleosidase activity"/>
    <property type="evidence" value="ECO:0000314"/>
    <property type="project" value="UniProtKB"/>
</dbReference>
<dbReference type="GO" id="GO:0045437">
    <property type="term" value="F:uridine nucleosidase activity"/>
    <property type="evidence" value="ECO:0000314"/>
    <property type="project" value="UniProtKB"/>
</dbReference>
<dbReference type="GO" id="GO:0009117">
    <property type="term" value="P:nucleotide metabolic process"/>
    <property type="evidence" value="ECO:0007669"/>
    <property type="project" value="UniProtKB-KW"/>
</dbReference>
<dbReference type="GO" id="GO:0043101">
    <property type="term" value="P:purine-containing compound salvage"/>
    <property type="evidence" value="ECO:0000304"/>
    <property type="project" value="UniProtKB"/>
</dbReference>
<dbReference type="CDD" id="cd02651">
    <property type="entry name" value="nuc_hydro_IU_UC_XIUA"/>
    <property type="match status" value="1"/>
</dbReference>
<dbReference type="FunFam" id="3.90.245.10:FF:000015">
    <property type="entry name" value="Inosine-uridine preferring nucleoside hydrolase"/>
    <property type="match status" value="1"/>
</dbReference>
<dbReference type="Gene3D" id="3.90.245.10">
    <property type="entry name" value="Ribonucleoside hydrolase-like"/>
    <property type="match status" value="1"/>
</dbReference>
<dbReference type="InterPro" id="IPR015910">
    <property type="entry name" value="I/U_nuclsd_hydro_CS"/>
</dbReference>
<dbReference type="InterPro" id="IPR001910">
    <property type="entry name" value="Inosine/uridine_hydrolase_dom"/>
</dbReference>
<dbReference type="InterPro" id="IPR023186">
    <property type="entry name" value="IUNH"/>
</dbReference>
<dbReference type="InterPro" id="IPR036452">
    <property type="entry name" value="Ribo_hydro-like"/>
</dbReference>
<dbReference type="PANTHER" id="PTHR12304">
    <property type="entry name" value="INOSINE-URIDINE PREFERRING NUCLEOSIDE HYDROLASE"/>
    <property type="match status" value="1"/>
</dbReference>
<dbReference type="PANTHER" id="PTHR12304:SF4">
    <property type="entry name" value="URIDINE NUCLEOSIDASE"/>
    <property type="match status" value="1"/>
</dbReference>
<dbReference type="Pfam" id="PF01156">
    <property type="entry name" value="IU_nuc_hydro"/>
    <property type="match status" value="1"/>
</dbReference>
<dbReference type="SUPFAM" id="SSF53590">
    <property type="entry name" value="Nucleoside hydrolase"/>
    <property type="match status" value="1"/>
</dbReference>
<dbReference type="PROSITE" id="PS01247">
    <property type="entry name" value="IUNH"/>
    <property type="match status" value="1"/>
</dbReference>